<accession>B5Z8U9</accession>
<protein>
    <recommendedName>
        <fullName evidence="1">Large ribosomal subunit protein uL15</fullName>
    </recommendedName>
    <alternativeName>
        <fullName evidence="3">50S ribosomal protein L15</fullName>
    </alternativeName>
</protein>
<reference key="1">
    <citation type="journal article" date="2009" name="J. Bacteriol.">
        <title>The complete genome sequence of Helicobacter pylori strain G27.</title>
        <authorList>
            <person name="Baltrus D.A."/>
            <person name="Amieva M.R."/>
            <person name="Covacci A."/>
            <person name="Lowe T.M."/>
            <person name="Merrell D.S."/>
            <person name="Ottemann K.M."/>
            <person name="Stein M."/>
            <person name="Salama N.R."/>
            <person name="Guillemin K."/>
        </authorList>
    </citation>
    <scope>NUCLEOTIDE SEQUENCE [LARGE SCALE GENOMIC DNA]</scope>
    <source>
        <strain>G27</strain>
    </source>
</reference>
<gene>
    <name evidence="1" type="primary">rplO</name>
    <name type="ordered locus">HPG27_1250</name>
</gene>
<comment type="function">
    <text evidence="1">Binds to the 23S rRNA.</text>
</comment>
<comment type="subunit">
    <text evidence="1">Part of the 50S ribosomal subunit.</text>
</comment>
<comment type="similarity">
    <text evidence="1">Belongs to the universal ribosomal protein uL15 family.</text>
</comment>
<sequence length="133" mass="14661">MGLENLKPAKGSVKKIKRVGRGQGSGMGKTATRGGKGQTARTGYKAKRGFEGGQQPLQRRLPKIGFRTKDSHIYSINVEKNEAIKNLEEITFSSLRALHHFPLYIEGVKLIGKDAKNLASKIKDERIKTSGQK</sequence>
<proteinExistence type="inferred from homology"/>
<organism>
    <name type="scientific">Helicobacter pylori (strain G27)</name>
    <dbReference type="NCBI Taxonomy" id="563041"/>
    <lineage>
        <taxon>Bacteria</taxon>
        <taxon>Pseudomonadati</taxon>
        <taxon>Campylobacterota</taxon>
        <taxon>Epsilonproteobacteria</taxon>
        <taxon>Campylobacterales</taxon>
        <taxon>Helicobacteraceae</taxon>
        <taxon>Helicobacter</taxon>
    </lineage>
</organism>
<name>RL15_HELPG</name>
<keyword id="KW-1185">Reference proteome</keyword>
<keyword id="KW-0687">Ribonucleoprotein</keyword>
<keyword id="KW-0689">Ribosomal protein</keyword>
<keyword id="KW-0694">RNA-binding</keyword>
<keyword id="KW-0699">rRNA-binding</keyword>
<dbReference type="EMBL" id="CP001173">
    <property type="protein sequence ID" value="ACI27998.1"/>
    <property type="molecule type" value="Genomic_DNA"/>
</dbReference>
<dbReference type="RefSeq" id="WP_000522167.1">
    <property type="nucleotide sequence ID" value="NC_011333.1"/>
</dbReference>
<dbReference type="SMR" id="B5Z8U9"/>
<dbReference type="KEGG" id="hpg:HPG27_1250"/>
<dbReference type="HOGENOM" id="CLU_055188_6_0_7"/>
<dbReference type="Proteomes" id="UP000001735">
    <property type="component" value="Chromosome"/>
</dbReference>
<dbReference type="GO" id="GO:0022625">
    <property type="term" value="C:cytosolic large ribosomal subunit"/>
    <property type="evidence" value="ECO:0007669"/>
    <property type="project" value="TreeGrafter"/>
</dbReference>
<dbReference type="GO" id="GO:0019843">
    <property type="term" value="F:rRNA binding"/>
    <property type="evidence" value="ECO:0007669"/>
    <property type="project" value="UniProtKB-UniRule"/>
</dbReference>
<dbReference type="GO" id="GO:0003735">
    <property type="term" value="F:structural constituent of ribosome"/>
    <property type="evidence" value="ECO:0007669"/>
    <property type="project" value="InterPro"/>
</dbReference>
<dbReference type="GO" id="GO:0006412">
    <property type="term" value="P:translation"/>
    <property type="evidence" value="ECO:0007669"/>
    <property type="project" value="UniProtKB-UniRule"/>
</dbReference>
<dbReference type="HAMAP" id="MF_01341">
    <property type="entry name" value="Ribosomal_uL15"/>
    <property type="match status" value="1"/>
</dbReference>
<dbReference type="InterPro" id="IPR030878">
    <property type="entry name" value="Ribosomal_uL15"/>
</dbReference>
<dbReference type="InterPro" id="IPR036227">
    <property type="entry name" value="Ribosomal_uL15/eL18_sf"/>
</dbReference>
<dbReference type="InterPro" id="IPR005749">
    <property type="entry name" value="Ribosomal_uL15_bac-type"/>
</dbReference>
<dbReference type="NCBIfam" id="TIGR01071">
    <property type="entry name" value="rplO_bact"/>
    <property type="match status" value="1"/>
</dbReference>
<dbReference type="PANTHER" id="PTHR12934">
    <property type="entry name" value="50S RIBOSOMAL PROTEIN L15"/>
    <property type="match status" value="1"/>
</dbReference>
<dbReference type="PANTHER" id="PTHR12934:SF11">
    <property type="entry name" value="LARGE RIBOSOMAL SUBUNIT PROTEIN UL15M"/>
    <property type="match status" value="1"/>
</dbReference>
<dbReference type="SUPFAM" id="SSF52080">
    <property type="entry name" value="Ribosomal proteins L15p and L18e"/>
    <property type="match status" value="1"/>
</dbReference>
<evidence type="ECO:0000255" key="1">
    <source>
        <dbReference type="HAMAP-Rule" id="MF_01341"/>
    </source>
</evidence>
<evidence type="ECO:0000256" key="2">
    <source>
        <dbReference type="SAM" id="MobiDB-lite"/>
    </source>
</evidence>
<evidence type="ECO:0000305" key="3"/>
<feature type="chain" id="PRO_1000142828" description="Large ribosomal subunit protein uL15">
    <location>
        <begin position="1"/>
        <end position="133"/>
    </location>
</feature>
<feature type="region of interest" description="Disordered" evidence="2">
    <location>
        <begin position="1"/>
        <end position="64"/>
    </location>
</feature>